<sequence>MAANKREPKVVVLGGGSWGTTVASICARRGPTLQWVRSAVTAQDINDNHRNSRYLGNDVVLSDTLRATTDFTEAANCADVVVMGVPSHGFRGVLVELSKELRPWVPVVSLVKGLEQGTNMRMSQIIEEVLPGHPAGILAGPNIAREVAEGYAAAAVLAMPDQHLATRLSAMFRTRRFRVYTTDDVVGVETAGALKNVFAIAVGMGYSLGIGENTRALVIARALREMTKLGVAMGGKSETFPGLAGLGDLIVTCTSQRSRNRHVGEQLGAGKPIDEIIASMSQVAEGVKAAGVVMEFANEFGLNMPIAREVDAVINHGSTVEQAYRGLIAEVPGHEVHGSGF</sequence>
<dbReference type="EC" id="1.1.1.94" evidence="1"/>
<dbReference type="EMBL" id="AE000516">
    <property type="protein sequence ID" value="AAK44813.1"/>
    <property type="molecule type" value="Genomic_DNA"/>
</dbReference>
<dbReference type="PIR" id="C70932">
    <property type="entry name" value="C70932"/>
</dbReference>
<dbReference type="RefSeq" id="WP_003900965.1">
    <property type="nucleotide sequence ID" value="NZ_KK341227.1"/>
</dbReference>
<dbReference type="SMR" id="P9WN74"/>
<dbReference type="KEGG" id="mtc:MT0590"/>
<dbReference type="PATRIC" id="fig|83331.31.peg.621"/>
<dbReference type="HOGENOM" id="CLU_033449_0_2_11"/>
<dbReference type="UniPathway" id="UPA00940"/>
<dbReference type="Proteomes" id="UP000001020">
    <property type="component" value="Chromosome"/>
</dbReference>
<dbReference type="GO" id="GO:0005829">
    <property type="term" value="C:cytosol"/>
    <property type="evidence" value="ECO:0007669"/>
    <property type="project" value="TreeGrafter"/>
</dbReference>
<dbReference type="GO" id="GO:0047952">
    <property type="term" value="F:glycerol-3-phosphate dehydrogenase [NAD(P)+] activity"/>
    <property type="evidence" value="ECO:0007669"/>
    <property type="project" value="UniProtKB-UniRule"/>
</dbReference>
<dbReference type="GO" id="GO:0051287">
    <property type="term" value="F:NAD binding"/>
    <property type="evidence" value="ECO:0007669"/>
    <property type="project" value="InterPro"/>
</dbReference>
<dbReference type="GO" id="GO:0005975">
    <property type="term" value="P:carbohydrate metabolic process"/>
    <property type="evidence" value="ECO:0007669"/>
    <property type="project" value="InterPro"/>
</dbReference>
<dbReference type="GO" id="GO:0046167">
    <property type="term" value="P:glycerol-3-phosphate biosynthetic process"/>
    <property type="evidence" value="ECO:0007669"/>
    <property type="project" value="UniProtKB-UniRule"/>
</dbReference>
<dbReference type="GO" id="GO:0046168">
    <property type="term" value="P:glycerol-3-phosphate catabolic process"/>
    <property type="evidence" value="ECO:0007669"/>
    <property type="project" value="InterPro"/>
</dbReference>
<dbReference type="GO" id="GO:0006650">
    <property type="term" value="P:glycerophospholipid metabolic process"/>
    <property type="evidence" value="ECO:0007669"/>
    <property type="project" value="UniProtKB-UniRule"/>
</dbReference>
<dbReference type="GO" id="GO:0008654">
    <property type="term" value="P:phospholipid biosynthetic process"/>
    <property type="evidence" value="ECO:0007669"/>
    <property type="project" value="UniProtKB-KW"/>
</dbReference>
<dbReference type="FunFam" id="1.10.1040.10:FF:000037">
    <property type="entry name" value="Glycerol-3-phosphate dehydrogenase [NAD(P)+]"/>
    <property type="match status" value="1"/>
</dbReference>
<dbReference type="FunFam" id="3.40.50.720:FF:000384">
    <property type="entry name" value="Glycerol-3-phosphate dehydrogenase [NAD(P)+]"/>
    <property type="match status" value="1"/>
</dbReference>
<dbReference type="Gene3D" id="1.10.1040.10">
    <property type="entry name" value="N-(1-d-carboxylethyl)-l-norvaline Dehydrogenase, domain 2"/>
    <property type="match status" value="1"/>
</dbReference>
<dbReference type="Gene3D" id="3.40.50.720">
    <property type="entry name" value="NAD(P)-binding Rossmann-like Domain"/>
    <property type="match status" value="1"/>
</dbReference>
<dbReference type="HAMAP" id="MF_00394">
    <property type="entry name" value="NAD_Glyc3P_dehydrog"/>
    <property type="match status" value="1"/>
</dbReference>
<dbReference type="InterPro" id="IPR008927">
    <property type="entry name" value="6-PGluconate_DH-like_C_sf"/>
</dbReference>
<dbReference type="InterPro" id="IPR013328">
    <property type="entry name" value="6PGD_dom2"/>
</dbReference>
<dbReference type="InterPro" id="IPR006168">
    <property type="entry name" value="G3P_DH_NAD-dep"/>
</dbReference>
<dbReference type="InterPro" id="IPR006109">
    <property type="entry name" value="G3P_DH_NAD-dep_C"/>
</dbReference>
<dbReference type="InterPro" id="IPR011128">
    <property type="entry name" value="G3P_DH_NAD-dep_N"/>
</dbReference>
<dbReference type="InterPro" id="IPR036291">
    <property type="entry name" value="NAD(P)-bd_dom_sf"/>
</dbReference>
<dbReference type="NCBIfam" id="NF000940">
    <property type="entry name" value="PRK00094.1-2"/>
    <property type="match status" value="1"/>
</dbReference>
<dbReference type="NCBIfam" id="NF000942">
    <property type="entry name" value="PRK00094.1-4"/>
    <property type="match status" value="1"/>
</dbReference>
<dbReference type="NCBIfam" id="NF009098">
    <property type="entry name" value="PRK12439.1"/>
    <property type="match status" value="1"/>
</dbReference>
<dbReference type="PANTHER" id="PTHR11728">
    <property type="entry name" value="GLYCEROL-3-PHOSPHATE DEHYDROGENASE"/>
    <property type="match status" value="1"/>
</dbReference>
<dbReference type="PANTHER" id="PTHR11728:SF1">
    <property type="entry name" value="GLYCEROL-3-PHOSPHATE DEHYDROGENASE [NAD(+)] 2, CHLOROPLASTIC"/>
    <property type="match status" value="1"/>
</dbReference>
<dbReference type="Pfam" id="PF07479">
    <property type="entry name" value="NAD_Gly3P_dh_C"/>
    <property type="match status" value="1"/>
</dbReference>
<dbReference type="Pfam" id="PF01210">
    <property type="entry name" value="NAD_Gly3P_dh_N"/>
    <property type="match status" value="1"/>
</dbReference>
<dbReference type="PIRSF" id="PIRSF000114">
    <property type="entry name" value="Glycerol-3-P_dh"/>
    <property type="match status" value="1"/>
</dbReference>
<dbReference type="PRINTS" id="PR00077">
    <property type="entry name" value="GPDHDRGNASE"/>
</dbReference>
<dbReference type="SUPFAM" id="SSF48179">
    <property type="entry name" value="6-phosphogluconate dehydrogenase C-terminal domain-like"/>
    <property type="match status" value="1"/>
</dbReference>
<dbReference type="SUPFAM" id="SSF51735">
    <property type="entry name" value="NAD(P)-binding Rossmann-fold domains"/>
    <property type="match status" value="1"/>
</dbReference>
<dbReference type="PROSITE" id="PS00957">
    <property type="entry name" value="NAD_G3PDH"/>
    <property type="match status" value="1"/>
</dbReference>
<name>GPDA1_MYCTO</name>
<proteinExistence type="inferred from homology"/>
<keyword id="KW-0963">Cytoplasm</keyword>
<keyword id="KW-0444">Lipid biosynthesis</keyword>
<keyword id="KW-0443">Lipid metabolism</keyword>
<keyword id="KW-0520">NAD</keyword>
<keyword id="KW-0521">NADP</keyword>
<keyword id="KW-0547">Nucleotide-binding</keyword>
<keyword id="KW-0560">Oxidoreductase</keyword>
<keyword id="KW-0594">Phospholipid biosynthesis</keyword>
<keyword id="KW-1208">Phospholipid metabolism</keyword>
<keyword id="KW-1185">Reference proteome</keyword>
<comment type="function">
    <text evidence="1">Catalyzes the reduction of the glycolytic intermediate dihydroxyacetone phosphate (DHAP) to sn-glycerol 3-phosphate (G3P), the key precursor for phospholipid synthesis.</text>
</comment>
<comment type="catalytic activity">
    <reaction evidence="1">
        <text>sn-glycerol 3-phosphate + NAD(+) = dihydroxyacetone phosphate + NADH + H(+)</text>
        <dbReference type="Rhea" id="RHEA:11092"/>
        <dbReference type="ChEBI" id="CHEBI:15378"/>
        <dbReference type="ChEBI" id="CHEBI:57540"/>
        <dbReference type="ChEBI" id="CHEBI:57597"/>
        <dbReference type="ChEBI" id="CHEBI:57642"/>
        <dbReference type="ChEBI" id="CHEBI:57945"/>
        <dbReference type="EC" id="1.1.1.94"/>
    </reaction>
    <physiologicalReaction direction="right-to-left" evidence="1">
        <dbReference type="Rhea" id="RHEA:11094"/>
    </physiologicalReaction>
</comment>
<comment type="catalytic activity">
    <reaction evidence="1">
        <text>sn-glycerol 3-phosphate + NADP(+) = dihydroxyacetone phosphate + NADPH + H(+)</text>
        <dbReference type="Rhea" id="RHEA:11096"/>
        <dbReference type="ChEBI" id="CHEBI:15378"/>
        <dbReference type="ChEBI" id="CHEBI:57597"/>
        <dbReference type="ChEBI" id="CHEBI:57642"/>
        <dbReference type="ChEBI" id="CHEBI:57783"/>
        <dbReference type="ChEBI" id="CHEBI:58349"/>
        <dbReference type="EC" id="1.1.1.94"/>
    </reaction>
    <physiologicalReaction direction="right-to-left" evidence="1">
        <dbReference type="Rhea" id="RHEA:11098"/>
    </physiologicalReaction>
</comment>
<comment type="pathway">
    <text evidence="1">Membrane lipid metabolism; glycerophospholipid metabolism.</text>
</comment>
<comment type="subcellular location">
    <subcellularLocation>
        <location evidence="1">Cytoplasm</location>
    </subcellularLocation>
</comment>
<comment type="similarity">
    <text evidence="1">Belongs to the NAD-dependent glycerol-3-phosphate dehydrogenase family.</text>
</comment>
<evidence type="ECO:0000255" key="1">
    <source>
        <dbReference type="HAMAP-Rule" id="MF_00394"/>
    </source>
</evidence>
<accession>P9WN74</accession>
<accession>L0T722</accession>
<accession>O53761</accession>
<accession>P64188</accession>
<organism>
    <name type="scientific">Mycobacterium tuberculosis (strain CDC 1551 / Oshkosh)</name>
    <dbReference type="NCBI Taxonomy" id="83331"/>
    <lineage>
        <taxon>Bacteria</taxon>
        <taxon>Bacillati</taxon>
        <taxon>Actinomycetota</taxon>
        <taxon>Actinomycetes</taxon>
        <taxon>Mycobacteriales</taxon>
        <taxon>Mycobacteriaceae</taxon>
        <taxon>Mycobacterium</taxon>
        <taxon>Mycobacterium tuberculosis complex</taxon>
    </lineage>
</organism>
<reference key="1">
    <citation type="journal article" date="2002" name="J. Bacteriol.">
        <title>Whole-genome comparison of Mycobacterium tuberculosis clinical and laboratory strains.</title>
        <authorList>
            <person name="Fleischmann R.D."/>
            <person name="Alland D."/>
            <person name="Eisen J.A."/>
            <person name="Carpenter L."/>
            <person name="White O."/>
            <person name="Peterson J.D."/>
            <person name="DeBoy R.T."/>
            <person name="Dodson R.J."/>
            <person name="Gwinn M.L."/>
            <person name="Haft D.H."/>
            <person name="Hickey E.K."/>
            <person name="Kolonay J.F."/>
            <person name="Nelson W.C."/>
            <person name="Umayam L.A."/>
            <person name="Ermolaeva M.D."/>
            <person name="Salzberg S.L."/>
            <person name="Delcher A."/>
            <person name="Utterback T.R."/>
            <person name="Weidman J.F."/>
            <person name="Khouri H.M."/>
            <person name="Gill J."/>
            <person name="Mikula A."/>
            <person name="Bishai W."/>
            <person name="Jacobs W.R. Jr."/>
            <person name="Venter J.C."/>
            <person name="Fraser C.M."/>
        </authorList>
    </citation>
    <scope>NUCLEOTIDE SEQUENCE [LARGE SCALE GENOMIC DNA]</scope>
    <source>
        <strain>CDC 1551 / Oshkosh</strain>
    </source>
</reference>
<feature type="chain" id="PRO_0000427176" description="Glycerol-3-phosphate dehydrogenase [NAD(P)+] 1">
    <location>
        <begin position="1"/>
        <end position="341"/>
    </location>
</feature>
<feature type="active site" description="Proton acceptor" evidence="1">
    <location>
        <position position="195"/>
    </location>
</feature>
<feature type="binding site" evidence="1">
    <location>
        <position position="17"/>
    </location>
    <ligand>
        <name>NADPH</name>
        <dbReference type="ChEBI" id="CHEBI:57783"/>
    </ligand>
</feature>
<feature type="binding site" evidence="1">
    <location>
        <position position="18"/>
    </location>
    <ligand>
        <name>NADPH</name>
        <dbReference type="ChEBI" id="CHEBI:57783"/>
    </ligand>
</feature>
<feature type="binding site" evidence="1">
    <location>
        <position position="37"/>
    </location>
    <ligand>
        <name>NADPH</name>
        <dbReference type="ChEBI" id="CHEBI:57783"/>
    </ligand>
</feature>
<feature type="binding site" evidence="1">
    <location>
        <position position="112"/>
    </location>
    <ligand>
        <name>NADPH</name>
        <dbReference type="ChEBI" id="CHEBI:57783"/>
    </ligand>
</feature>
<feature type="binding site" evidence="1">
    <location>
        <position position="112"/>
    </location>
    <ligand>
        <name>sn-glycerol 3-phosphate</name>
        <dbReference type="ChEBI" id="CHEBI:57597"/>
    </ligand>
</feature>
<feature type="binding site" evidence="1">
    <location>
        <position position="140"/>
    </location>
    <ligand>
        <name>sn-glycerol 3-phosphate</name>
        <dbReference type="ChEBI" id="CHEBI:57597"/>
    </ligand>
</feature>
<feature type="binding site" evidence="1">
    <location>
        <position position="144"/>
    </location>
    <ligand>
        <name>NADPH</name>
        <dbReference type="ChEBI" id="CHEBI:57783"/>
    </ligand>
</feature>
<feature type="binding site" evidence="1">
    <location>
        <position position="195"/>
    </location>
    <ligand>
        <name>sn-glycerol 3-phosphate</name>
        <dbReference type="ChEBI" id="CHEBI:57597"/>
    </ligand>
</feature>
<feature type="binding site" evidence="1">
    <location>
        <position position="248"/>
    </location>
    <ligand>
        <name>sn-glycerol 3-phosphate</name>
        <dbReference type="ChEBI" id="CHEBI:57597"/>
    </ligand>
</feature>
<feature type="binding site" evidence="1">
    <location>
        <position position="258"/>
    </location>
    <ligand>
        <name>sn-glycerol 3-phosphate</name>
        <dbReference type="ChEBI" id="CHEBI:57597"/>
    </ligand>
</feature>
<feature type="binding site" evidence="1">
    <location>
        <position position="259"/>
    </location>
    <ligand>
        <name>NADPH</name>
        <dbReference type="ChEBI" id="CHEBI:57783"/>
    </ligand>
</feature>
<feature type="binding site" evidence="1">
    <location>
        <position position="259"/>
    </location>
    <ligand>
        <name>sn-glycerol 3-phosphate</name>
        <dbReference type="ChEBI" id="CHEBI:57597"/>
    </ligand>
</feature>
<feature type="binding site" evidence="1">
    <location>
        <position position="260"/>
    </location>
    <ligand>
        <name>sn-glycerol 3-phosphate</name>
        <dbReference type="ChEBI" id="CHEBI:57597"/>
    </ligand>
</feature>
<feature type="binding site" evidence="1">
    <location>
        <position position="283"/>
    </location>
    <ligand>
        <name>NADPH</name>
        <dbReference type="ChEBI" id="CHEBI:57783"/>
    </ligand>
</feature>
<feature type="binding site" evidence="1">
    <location>
        <position position="285"/>
    </location>
    <ligand>
        <name>NADPH</name>
        <dbReference type="ChEBI" id="CHEBI:57783"/>
    </ligand>
</feature>
<gene>
    <name evidence="1" type="primary">gpsA1</name>
    <name type="synonym">gpdA1</name>
    <name type="ordered locus">MT0590</name>
</gene>
<protein>
    <recommendedName>
        <fullName evidence="1">Glycerol-3-phosphate dehydrogenase [NAD(P)+] 1</fullName>
        <ecNumber evidence="1">1.1.1.94</ecNumber>
    </recommendedName>
    <alternativeName>
        <fullName evidence="1">NAD(P)(+)-dependent glycerol-3-phosphate dehydrogenase 1</fullName>
    </alternativeName>
    <alternativeName>
        <fullName evidence="1">NAD(P)H-dependent dihydroxyacetone-phosphate reductase 1</fullName>
    </alternativeName>
</protein>